<feature type="chain" id="PRO_0000238111" description="33 kDa chaperonin">
    <location>
        <begin position="1"/>
        <end position="293"/>
    </location>
</feature>
<feature type="disulfide bond" description="Redox-active" evidence="1">
    <location>
        <begin position="231"/>
        <end position="233"/>
    </location>
</feature>
<feature type="disulfide bond" description="Redox-active" evidence="1">
    <location>
        <begin position="264"/>
        <end position="267"/>
    </location>
</feature>
<reference key="1">
    <citation type="journal article" date="2004" name="Proc. Natl. Acad. Sci. U.S.A.">
        <title>Insights into the evolution of Yersinia pestis through whole-genome comparison with Yersinia pseudotuberculosis.</title>
        <authorList>
            <person name="Chain P.S.G."/>
            <person name="Carniel E."/>
            <person name="Larimer F.W."/>
            <person name="Lamerdin J."/>
            <person name="Stoutland P.O."/>
            <person name="Regala W.M."/>
            <person name="Georgescu A.M."/>
            <person name="Vergez L.M."/>
            <person name="Land M.L."/>
            <person name="Motin V.L."/>
            <person name="Brubaker R.R."/>
            <person name="Fowler J."/>
            <person name="Hinnebusch J."/>
            <person name="Marceau M."/>
            <person name="Medigue C."/>
            <person name="Simonet M."/>
            <person name="Chenal-Francisque V."/>
            <person name="Souza B."/>
            <person name="Dacheux D."/>
            <person name="Elliott J.M."/>
            <person name="Derbise A."/>
            <person name="Hauser L.J."/>
            <person name="Garcia E."/>
        </authorList>
    </citation>
    <scope>NUCLEOTIDE SEQUENCE [LARGE SCALE GENOMIC DNA]</scope>
    <source>
        <strain>IP32953</strain>
    </source>
</reference>
<gene>
    <name evidence="1" type="primary">hslO</name>
    <name type="ordered locus">YPTB3761</name>
</gene>
<protein>
    <recommendedName>
        <fullName evidence="1">33 kDa chaperonin</fullName>
    </recommendedName>
    <alternativeName>
        <fullName evidence="1">Heat shock protein 33 homolog</fullName>
        <shortName evidence="1">HSP33</shortName>
    </alternativeName>
</protein>
<keyword id="KW-0143">Chaperone</keyword>
<keyword id="KW-0963">Cytoplasm</keyword>
<keyword id="KW-1015">Disulfide bond</keyword>
<keyword id="KW-0676">Redox-active center</keyword>
<keyword id="KW-0862">Zinc</keyword>
<organism>
    <name type="scientific">Yersinia pseudotuberculosis serotype I (strain IP32953)</name>
    <dbReference type="NCBI Taxonomy" id="273123"/>
    <lineage>
        <taxon>Bacteria</taxon>
        <taxon>Pseudomonadati</taxon>
        <taxon>Pseudomonadota</taxon>
        <taxon>Gammaproteobacteria</taxon>
        <taxon>Enterobacterales</taxon>
        <taxon>Yersiniaceae</taxon>
        <taxon>Yersinia</taxon>
    </lineage>
</organism>
<name>HSLO_YERPS</name>
<comment type="function">
    <text evidence="1">Redox regulated molecular chaperone. Protects both thermally unfolding and oxidatively damaged proteins from irreversible aggregation. Plays an important role in the bacterial defense system toward oxidative stress.</text>
</comment>
<comment type="subcellular location">
    <subcellularLocation>
        <location evidence="1">Cytoplasm</location>
    </subcellularLocation>
</comment>
<comment type="PTM">
    <text evidence="1">Under oxidizing conditions two disulfide bonds are formed involving the reactive cysteines. Under reducing conditions zinc is bound to the reactive cysteines and the protein is inactive.</text>
</comment>
<comment type="similarity">
    <text evidence="1">Belongs to the HSP33 family.</text>
</comment>
<evidence type="ECO:0000255" key="1">
    <source>
        <dbReference type="HAMAP-Rule" id="MF_00117"/>
    </source>
</evidence>
<accession>Q664K8</accession>
<proteinExistence type="inferred from homology"/>
<sequence>MSNHDQLHRYLFANHAVRGELVSVNETYQQVLANHDYPPAVQKLLGEMLVATSLLTATLKFDGDITVQLQGGDGPLTLAVINGNNRQEMRGVARVKGEISDDSTLQEMVGNGYLVITITPAQGERYQGVVALEGETIAACLENYFMQSEQLPTRLFIRTGHVADKAAAGGMLLQVLPAQERNEDEFDHLAQLTATIKAEELFTLPANEVLYRLYHQEEVTLYEPQNVSFRCTCSRQRCADALVTLADDDVTEMLEQDGNIDMHCEYCGNHYLFDAVDIATLKNGNSASSEQIH</sequence>
<dbReference type="EMBL" id="BX936398">
    <property type="protein sequence ID" value="CAH22999.1"/>
    <property type="molecule type" value="Genomic_DNA"/>
</dbReference>
<dbReference type="RefSeq" id="WP_002208911.1">
    <property type="nucleotide sequence ID" value="NZ_CP009712.1"/>
</dbReference>
<dbReference type="SMR" id="Q664K8"/>
<dbReference type="GeneID" id="57974461"/>
<dbReference type="KEGG" id="ypo:BZ17_2824"/>
<dbReference type="KEGG" id="yps:YPTB3761"/>
<dbReference type="PATRIC" id="fig|273123.14.peg.2963"/>
<dbReference type="Proteomes" id="UP000001011">
    <property type="component" value="Chromosome"/>
</dbReference>
<dbReference type="GO" id="GO:0005737">
    <property type="term" value="C:cytoplasm"/>
    <property type="evidence" value="ECO:0007669"/>
    <property type="project" value="UniProtKB-SubCell"/>
</dbReference>
<dbReference type="GO" id="GO:0044183">
    <property type="term" value="F:protein folding chaperone"/>
    <property type="evidence" value="ECO:0007669"/>
    <property type="project" value="TreeGrafter"/>
</dbReference>
<dbReference type="GO" id="GO:0051082">
    <property type="term" value="F:unfolded protein binding"/>
    <property type="evidence" value="ECO:0007669"/>
    <property type="project" value="UniProtKB-UniRule"/>
</dbReference>
<dbReference type="GO" id="GO:0042026">
    <property type="term" value="P:protein refolding"/>
    <property type="evidence" value="ECO:0007669"/>
    <property type="project" value="TreeGrafter"/>
</dbReference>
<dbReference type="CDD" id="cd00498">
    <property type="entry name" value="Hsp33"/>
    <property type="match status" value="1"/>
</dbReference>
<dbReference type="Gene3D" id="1.10.287.480">
    <property type="entry name" value="helix hairpin bin"/>
    <property type="match status" value="1"/>
</dbReference>
<dbReference type="Gene3D" id="3.55.30.10">
    <property type="entry name" value="Hsp33 domain"/>
    <property type="match status" value="1"/>
</dbReference>
<dbReference type="Gene3D" id="3.90.1280.10">
    <property type="entry name" value="HSP33 redox switch-like"/>
    <property type="match status" value="1"/>
</dbReference>
<dbReference type="HAMAP" id="MF_00117">
    <property type="entry name" value="HslO"/>
    <property type="match status" value="1"/>
</dbReference>
<dbReference type="InterPro" id="IPR000397">
    <property type="entry name" value="Heat_shock_Hsp33"/>
</dbReference>
<dbReference type="InterPro" id="IPR016154">
    <property type="entry name" value="Heat_shock_Hsp33_C"/>
</dbReference>
<dbReference type="InterPro" id="IPR016153">
    <property type="entry name" value="Heat_shock_Hsp33_N"/>
</dbReference>
<dbReference type="InterPro" id="IPR023212">
    <property type="entry name" value="Hsp33_helix_hairpin_bin_dom_sf"/>
</dbReference>
<dbReference type="NCBIfam" id="NF001033">
    <property type="entry name" value="PRK00114.1"/>
    <property type="match status" value="1"/>
</dbReference>
<dbReference type="PANTHER" id="PTHR30111">
    <property type="entry name" value="33 KDA CHAPERONIN"/>
    <property type="match status" value="1"/>
</dbReference>
<dbReference type="PANTHER" id="PTHR30111:SF1">
    <property type="entry name" value="33 KDA CHAPERONIN"/>
    <property type="match status" value="1"/>
</dbReference>
<dbReference type="Pfam" id="PF01430">
    <property type="entry name" value="HSP33"/>
    <property type="match status" value="1"/>
</dbReference>
<dbReference type="PIRSF" id="PIRSF005261">
    <property type="entry name" value="Heat_shock_Hsp33"/>
    <property type="match status" value="1"/>
</dbReference>
<dbReference type="SUPFAM" id="SSF64397">
    <property type="entry name" value="Hsp33 domain"/>
    <property type="match status" value="1"/>
</dbReference>
<dbReference type="SUPFAM" id="SSF118352">
    <property type="entry name" value="HSP33 redox switch-like"/>
    <property type="match status" value="1"/>
</dbReference>